<accession>B5BL96</accession>
<sequence length="264" mass="30400">MKKLKLHGFNNLTKSLSFCIYDICYAKTAEERDGYIAYIDELYNANRLTEILSETCSIIGANILNIARQDYEPQGASVTILVSEEPVDPKLIDQTEHPGPLPETVVAHLDKSHICVHTYPESHPEGGLCTFRADIEVSTCGVISPLKALNYLIHQLESDIVTIDYRVRGFTRDVNGMKHFIDHEINSIQNFMSEDMKSLYDMVDVNVYQENIFHTKMLLKEFDLKHYMFHTKPEDLTETERQQITAALWKEMREIYYGRNISAV</sequence>
<protein>
    <recommendedName>
        <fullName evidence="1">S-adenosylmethionine decarboxylase proenzyme</fullName>
        <shortName evidence="1">AdoMetDC</shortName>
        <shortName evidence="1">SAMDC</shortName>
        <ecNumber evidence="1">4.1.1.50</ecNumber>
    </recommendedName>
    <component>
        <recommendedName>
            <fullName evidence="1">S-adenosylmethionine decarboxylase beta chain</fullName>
        </recommendedName>
    </component>
    <component>
        <recommendedName>
            <fullName evidence="1">S-adenosylmethionine decarboxylase alpha chain</fullName>
        </recommendedName>
    </component>
</protein>
<feature type="chain" id="PRO_0000364409" description="S-adenosylmethionine decarboxylase beta chain" evidence="1">
    <location>
        <begin position="1"/>
        <end position="111"/>
    </location>
</feature>
<feature type="chain" id="PRO_0000364410" description="S-adenosylmethionine decarboxylase alpha chain" evidence="1">
    <location>
        <begin position="112"/>
        <end position="264"/>
    </location>
</feature>
<feature type="active site" description="Schiff-base intermediate with substrate; via pyruvic acid" evidence="1">
    <location>
        <position position="112"/>
    </location>
</feature>
<feature type="active site" description="Proton acceptor; for processing activity" evidence="1">
    <location>
        <position position="117"/>
    </location>
</feature>
<feature type="active site" description="Proton donor; for catalytic activity" evidence="1">
    <location>
        <position position="140"/>
    </location>
</feature>
<feature type="site" description="Cleavage (non-hydrolytic); by autolysis" evidence="1">
    <location>
        <begin position="111"/>
        <end position="112"/>
    </location>
</feature>
<feature type="modified residue" description="Pyruvic acid (Ser); by autocatalysis" evidence="1">
    <location>
        <position position="112"/>
    </location>
</feature>
<name>SPED_SALPK</name>
<organism>
    <name type="scientific">Salmonella paratyphi A (strain AKU_12601)</name>
    <dbReference type="NCBI Taxonomy" id="554290"/>
    <lineage>
        <taxon>Bacteria</taxon>
        <taxon>Pseudomonadati</taxon>
        <taxon>Pseudomonadota</taxon>
        <taxon>Gammaproteobacteria</taxon>
        <taxon>Enterobacterales</taxon>
        <taxon>Enterobacteriaceae</taxon>
        <taxon>Salmonella</taxon>
    </lineage>
</organism>
<keyword id="KW-0068">Autocatalytic cleavage</keyword>
<keyword id="KW-0210">Decarboxylase</keyword>
<keyword id="KW-0456">Lyase</keyword>
<keyword id="KW-0620">Polyamine biosynthesis</keyword>
<keyword id="KW-0670">Pyruvate</keyword>
<keyword id="KW-0949">S-adenosyl-L-methionine</keyword>
<keyword id="KW-0704">Schiff base</keyword>
<keyword id="KW-0745">Spermidine biosynthesis</keyword>
<keyword id="KW-0865">Zymogen</keyword>
<proteinExistence type="inferred from homology"/>
<reference key="1">
    <citation type="journal article" date="2009" name="BMC Genomics">
        <title>Pseudogene accumulation in the evolutionary histories of Salmonella enterica serovars Paratyphi A and Typhi.</title>
        <authorList>
            <person name="Holt K.E."/>
            <person name="Thomson N.R."/>
            <person name="Wain J."/>
            <person name="Langridge G.C."/>
            <person name="Hasan R."/>
            <person name="Bhutta Z.A."/>
            <person name="Quail M.A."/>
            <person name="Norbertczak H."/>
            <person name="Walker D."/>
            <person name="Simmonds M."/>
            <person name="White B."/>
            <person name="Bason N."/>
            <person name="Mungall K."/>
            <person name="Dougan G."/>
            <person name="Parkhill J."/>
        </authorList>
    </citation>
    <scope>NUCLEOTIDE SEQUENCE [LARGE SCALE GENOMIC DNA]</scope>
    <source>
        <strain>AKU_12601</strain>
    </source>
</reference>
<dbReference type="EC" id="4.1.1.50" evidence="1"/>
<dbReference type="EMBL" id="FM200053">
    <property type="protein sequence ID" value="CAR58275.1"/>
    <property type="molecule type" value="Genomic_DNA"/>
</dbReference>
<dbReference type="RefSeq" id="WP_000734294.1">
    <property type="nucleotide sequence ID" value="NC_011147.1"/>
</dbReference>
<dbReference type="KEGG" id="sek:SSPA0164"/>
<dbReference type="HOGENOM" id="CLU_092007_0_0_6"/>
<dbReference type="UniPathway" id="UPA00331">
    <property type="reaction ID" value="UER00451"/>
</dbReference>
<dbReference type="Proteomes" id="UP000001869">
    <property type="component" value="Chromosome"/>
</dbReference>
<dbReference type="GO" id="GO:0005829">
    <property type="term" value="C:cytosol"/>
    <property type="evidence" value="ECO:0007669"/>
    <property type="project" value="TreeGrafter"/>
</dbReference>
<dbReference type="GO" id="GO:0004014">
    <property type="term" value="F:adenosylmethionine decarboxylase activity"/>
    <property type="evidence" value="ECO:0007669"/>
    <property type="project" value="UniProtKB-UniRule"/>
</dbReference>
<dbReference type="GO" id="GO:0008295">
    <property type="term" value="P:spermidine biosynthetic process"/>
    <property type="evidence" value="ECO:0007669"/>
    <property type="project" value="UniProtKB-UniRule"/>
</dbReference>
<dbReference type="FunFam" id="3.60.90.10:FF:000001">
    <property type="entry name" value="S-adenosylmethionine decarboxylase proenzyme"/>
    <property type="match status" value="1"/>
</dbReference>
<dbReference type="Gene3D" id="3.60.90.10">
    <property type="entry name" value="S-adenosylmethionine decarboxylase"/>
    <property type="match status" value="1"/>
</dbReference>
<dbReference type="HAMAP" id="MF_00465">
    <property type="entry name" value="AdoMetDC_2"/>
    <property type="match status" value="1"/>
</dbReference>
<dbReference type="InterPro" id="IPR003826">
    <property type="entry name" value="AdoMetDC_fam_prok"/>
</dbReference>
<dbReference type="InterPro" id="IPR009165">
    <property type="entry name" value="S-AdoMet_deCO2ase_bac"/>
</dbReference>
<dbReference type="InterPro" id="IPR016067">
    <property type="entry name" value="S-AdoMet_deCO2ase_core"/>
</dbReference>
<dbReference type="NCBIfam" id="TIGR03331">
    <property type="entry name" value="SAM_DCase_Eco"/>
    <property type="match status" value="1"/>
</dbReference>
<dbReference type="PANTHER" id="PTHR33866">
    <property type="entry name" value="S-ADENOSYLMETHIONINE DECARBOXYLASE PROENZYME"/>
    <property type="match status" value="1"/>
</dbReference>
<dbReference type="PANTHER" id="PTHR33866:SF1">
    <property type="entry name" value="S-ADENOSYLMETHIONINE DECARBOXYLASE PROENZYME"/>
    <property type="match status" value="1"/>
</dbReference>
<dbReference type="Pfam" id="PF02675">
    <property type="entry name" value="AdoMet_dc"/>
    <property type="match status" value="1"/>
</dbReference>
<dbReference type="PIRSF" id="PIRSF001356">
    <property type="entry name" value="SAM_decarboxylas"/>
    <property type="match status" value="1"/>
</dbReference>
<dbReference type="SUPFAM" id="SSF56276">
    <property type="entry name" value="S-adenosylmethionine decarboxylase"/>
    <property type="match status" value="1"/>
</dbReference>
<comment type="function">
    <text evidence="1">Catalyzes the decarboxylation of S-adenosylmethionine to S-adenosylmethioninamine (dcAdoMet), the propylamine donor required for the synthesis of the polyamines spermine and spermidine from the diamine putrescine.</text>
</comment>
<comment type="catalytic activity">
    <reaction evidence="1">
        <text>S-adenosyl-L-methionine + H(+) = S-adenosyl 3-(methylsulfanyl)propylamine + CO2</text>
        <dbReference type="Rhea" id="RHEA:15981"/>
        <dbReference type="ChEBI" id="CHEBI:15378"/>
        <dbReference type="ChEBI" id="CHEBI:16526"/>
        <dbReference type="ChEBI" id="CHEBI:57443"/>
        <dbReference type="ChEBI" id="CHEBI:59789"/>
        <dbReference type="EC" id="4.1.1.50"/>
    </reaction>
</comment>
<comment type="cofactor">
    <cofactor evidence="1">
        <name>pyruvate</name>
        <dbReference type="ChEBI" id="CHEBI:15361"/>
    </cofactor>
    <text evidence="1">Binds 1 pyruvoyl group covalently per subunit.</text>
</comment>
<comment type="pathway">
    <text evidence="1">Amine and polyamine biosynthesis; S-adenosylmethioninamine biosynthesis; S-adenosylmethioninamine from S-adenosyl-L-methionine: step 1/1.</text>
</comment>
<comment type="subunit">
    <text evidence="1">Heterooctamer of four alpha and four beta chains arranged as a tetramer of alpha/beta heterodimers.</text>
</comment>
<comment type="PTM">
    <text evidence="1">Is synthesized initially as an inactive proenzyme. Formation of the active enzyme involves a self-maturation process in which the active site pyruvoyl group is generated from an internal serine residue via an autocatalytic post-translational modification. Two non-identical subunits are generated from the proenzyme in this reaction, and the pyruvate is formed at the N-terminus of the alpha chain, which is derived from the carboxyl end of the proenzyme. The post-translation cleavage follows an unusual pathway, termed non-hydrolytic serinolysis, in which the side chain hydroxyl group of the serine supplies its oxygen atom to form the C-terminus of the beta chain, while the remainder of the serine residue undergoes an oxidative deamination to produce ammonia and the pyruvoyl group blocking the N-terminus of the alpha chain.</text>
</comment>
<comment type="similarity">
    <text evidence="1">Belongs to the prokaryotic AdoMetDC family. Type 2 subfamily.</text>
</comment>
<evidence type="ECO:0000255" key="1">
    <source>
        <dbReference type="HAMAP-Rule" id="MF_00465"/>
    </source>
</evidence>
<gene>
    <name evidence="1" type="primary">speD</name>
    <name type="ordered locus">SSPA0164</name>
</gene>